<dbReference type="EMBL" id="AL591985">
    <property type="protein sequence ID" value="CAC49371.1"/>
    <property type="molecule type" value="Genomic_DNA"/>
</dbReference>
<dbReference type="PIR" id="C95963">
    <property type="entry name" value="C95963"/>
</dbReference>
<dbReference type="RefSeq" id="NP_437511.1">
    <property type="nucleotide sequence ID" value="NC_003078.1"/>
</dbReference>
<dbReference type="RefSeq" id="WP_010975815.1">
    <property type="nucleotide sequence ID" value="NC_003078.1"/>
</dbReference>
<dbReference type="SMR" id="Q92UW5"/>
<dbReference type="EnsemblBacteria" id="CAC49371">
    <property type="protein sequence ID" value="CAC49371"/>
    <property type="gene ID" value="SM_b21531"/>
</dbReference>
<dbReference type="KEGG" id="sme:SM_b21531"/>
<dbReference type="PATRIC" id="fig|266834.11.peg.5898"/>
<dbReference type="eggNOG" id="COG2855">
    <property type="taxonomic scope" value="Bacteria"/>
</dbReference>
<dbReference type="HOGENOM" id="CLU_033541_0_1_5"/>
<dbReference type="OrthoDB" id="5393513at2"/>
<dbReference type="PRO" id="PR:Q92UW5"/>
<dbReference type="Proteomes" id="UP000001976">
    <property type="component" value="Plasmid pSymB"/>
</dbReference>
<dbReference type="GO" id="GO:0005886">
    <property type="term" value="C:plasma membrane"/>
    <property type="evidence" value="ECO:0007669"/>
    <property type="project" value="UniProtKB-SubCell"/>
</dbReference>
<dbReference type="InterPro" id="IPR018383">
    <property type="entry name" value="UPF0324_pro"/>
</dbReference>
<dbReference type="PANTHER" id="PTHR30106">
    <property type="entry name" value="INNER MEMBRANE PROTEIN YEIH-RELATED"/>
    <property type="match status" value="1"/>
</dbReference>
<dbReference type="PANTHER" id="PTHR30106:SF2">
    <property type="entry name" value="UPF0324 INNER MEMBRANE PROTEIN YEIH"/>
    <property type="match status" value="1"/>
</dbReference>
<dbReference type="Pfam" id="PF03601">
    <property type="entry name" value="Cons_hypoth698"/>
    <property type="match status" value="1"/>
</dbReference>
<organism>
    <name type="scientific">Rhizobium meliloti (strain 1021)</name>
    <name type="common">Ensifer meliloti</name>
    <name type="synonym">Sinorhizobium meliloti</name>
    <dbReference type="NCBI Taxonomy" id="266834"/>
    <lineage>
        <taxon>Bacteria</taxon>
        <taxon>Pseudomonadati</taxon>
        <taxon>Pseudomonadota</taxon>
        <taxon>Alphaproteobacteria</taxon>
        <taxon>Hyphomicrobiales</taxon>
        <taxon>Rhizobiaceae</taxon>
        <taxon>Sinorhizobium/Ensifer group</taxon>
        <taxon>Sinorhizobium</taxon>
    </lineage>
</organism>
<sequence>MDAISKTERRKQSLSVVLSTYGPGLLVTAAVAMAAQFLSEHYGAPAMLMALLLGIAFHFLAEEGRCVAGIELSAKLVLRIGVALLGMRISVDLLIGLGGGTILLLVSAIVATILFGLVAARLLGRGWRLALLTSGAVAICGASAAMAIAAVLPRNEFSERNLIFTVLSVTVLSTLAMIGYPIVAEYLGLDGQATGIFFGGTIHDVAQVVGAGFSVSPEAGETATLVKLIRVTMLAPVVLIFSLVLRSVPQEGASIGKRAPLVPGFVLAFLVLAGFNSAGLVPVLASEVGMAISRWALLAGIVAVGMKTSLRRVLEVGGDAVALVVAETLFIAVFILAGMYYLGHS</sequence>
<name>Y5671_RHIME</name>
<evidence type="ECO:0000255" key="1"/>
<evidence type="ECO:0000305" key="2"/>
<reference key="1">
    <citation type="journal article" date="2001" name="Proc. Natl. Acad. Sci. U.S.A.">
        <title>The complete sequence of the 1,683-kb pSymB megaplasmid from the N2-fixing endosymbiont Sinorhizobium meliloti.</title>
        <authorList>
            <person name="Finan T.M."/>
            <person name="Weidner S."/>
            <person name="Wong K."/>
            <person name="Buhrmester J."/>
            <person name="Chain P."/>
            <person name="Vorhoelter F.J."/>
            <person name="Hernandez-Lucas I."/>
            <person name="Becker A."/>
            <person name="Cowie A."/>
            <person name="Gouzy J."/>
            <person name="Golding B."/>
            <person name="Puehler A."/>
        </authorList>
    </citation>
    <scope>NUCLEOTIDE SEQUENCE [LARGE SCALE GENOMIC DNA]</scope>
    <source>
        <strain>1021</strain>
    </source>
</reference>
<reference key="2">
    <citation type="journal article" date="2001" name="Science">
        <title>The composite genome of the legume symbiont Sinorhizobium meliloti.</title>
        <authorList>
            <person name="Galibert F."/>
            <person name="Finan T.M."/>
            <person name="Long S.R."/>
            <person name="Puehler A."/>
            <person name="Abola P."/>
            <person name="Ampe F."/>
            <person name="Barloy-Hubler F."/>
            <person name="Barnett M.J."/>
            <person name="Becker A."/>
            <person name="Boistard P."/>
            <person name="Bothe G."/>
            <person name="Boutry M."/>
            <person name="Bowser L."/>
            <person name="Buhrmester J."/>
            <person name="Cadieu E."/>
            <person name="Capela D."/>
            <person name="Chain P."/>
            <person name="Cowie A."/>
            <person name="Davis R.W."/>
            <person name="Dreano S."/>
            <person name="Federspiel N.A."/>
            <person name="Fisher R.F."/>
            <person name="Gloux S."/>
            <person name="Godrie T."/>
            <person name="Goffeau A."/>
            <person name="Golding B."/>
            <person name="Gouzy J."/>
            <person name="Gurjal M."/>
            <person name="Hernandez-Lucas I."/>
            <person name="Hong A."/>
            <person name="Huizar L."/>
            <person name="Hyman R.W."/>
            <person name="Jones T."/>
            <person name="Kahn D."/>
            <person name="Kahn M.L."/>
            <person name="Kalman S."/>
            <person name="Keating D.H."/>
            <person name="Kiss E."/>
            <person name="Komp C."/>
            <person name="Lelaure V."/>
            <person name="Masuy D."/>
            <person name="Palm C."/>
            <person name="Peck M.C."/>
            <person name="Pohl T.M."/>
            <person name="Portetelle D."/>
            <person name="Purnelle B."/>
            <person name="Ramsperger U."/>
            <person name="Surzycki R."/>
            <person name="Thebault P."/>
            <person name="Vandenbol M."/>
            <person name="Vorhoelter F.J."/>
            <person name="Weidner S."/>
            <person name="Wells D.H."/>
            <person name="Wong K."/>
            <person name="Yeh K.-C."/>
            <person name="Batut J."/>
        </authorList>
    </citation>
    <scope>NUCLEOTIDE SEQUENCE [LARGE SCALE GENOMIC DNA]</scope>
    <source>
        <strain>1021</strain>
    </source>
</reference>
<keyword id="KW-1003">Cell membrane</keyword>
<keyword id="KW-0472">Membrane</keyword>
<keyword id="KW-0614">Plasmid</keyword>
<keyword id="KW-1185">Reference proteome</keyword>
<keyword id="KW-0812">Transmembrane</keyword>
<keyword id="KW-1133">Transmembrane helix</keyword>
<accession>Q92UW5</accession>
<protein>
    <recommendedName>
        <fullName>UPF0324 membrane protein RB0971</fullName>
    </recommendedName>
</protein>
<comment type="subcellular location">
    <subcellularLocation>
        <location evidence="2">Cell membrane</location>
        <topology evidence="2">Multi-pass membrane protein</topology>
    </subcellularLocation>
</comment>
<comment type="similarity">
    <text evidence="2">Belongs to the UPF0324 family.</text>
</comment>
<feature type="chain" id="PRO_0000157444" description="UPF0324 membrane protein RB0971">
    <location>
        <begin position="1"/>
        <end position="345"/>
    </location>
</feature>
<feature type="transmembrane region" description="Helical" evidence="1">
    <location>
        <begin position="13"/>
        <end position="32"/>
    </location>
</feature>
<feature type="transmembrane region" description="Helical" evidence="1">
    <location>
        <begin position="42"/>
        <end position="61"/>
    </location>
</feature>
<feature type="transmembrane region" description="Helical" evidence="1">
    <location>
        <begin position="93"/>
        <end position="115"/>
    </location>
</feature>
<feature type="transmembrane region" description="Helical" evidence="1">
    <location>
        <begin position="130"/>
        <end position="152"/>
    </location>
</feature>
<feature type="transmembrane region" description="Helical" evidence="1">
    <location>
        <begin position="161"/>
        <end position="183"/>
    </location>
</feature>
<feature type="transmembrane region" description="Helical" evidence="1">
    <location>
        <begin position="193"/>
        <end position="215"/>
    </location>
</feature>
<feature type="transmembrane region" description="Helical" evidence="1">
    <location>
        <begin position="228"/>
        <end position="247"/>
    </location>
</feature>
<feature type="transmembrane region" description="Helical" evidence="1">
    <location>
        <begin position="262"/>
        <end position="284"/>
    </location>
</feature>
<feature type="transmembrane region" description="Helical" evidence="1">
    <location>
        <begin position="291"/>
        <end position="310"/>
    </location>
</feature>
<feature type="transmembrane region" description="Helical" evidence="1">
    <location>
        <begin position="320"/>
        <end position="342"/>
    </location>
</feature>
<geneLocation type="plasmid">
    <name>pSymB</name>
    <name>megaplasmid 2</name>
</geneLocation>
<proteinExistence type="inferred from homology"/>
<gene>
    <name type="ordered locus">RB0971</name>
    <name type="ORF">SMb21531</name>
</gene>